<evidence type="ECO:0000255" key="1">
    <source>
        <dbReference type="HAMAP-Rule" id="MF_00377"/>
    </source>
</evidence>
<dbReference type="EMBL" id="CP000764">
    <property type="protein sequence ID" value="ABS20377.1"/>
    <property type="molecule type" value="Genomic_DNA"/>
</dbReference>
<dbReference type="RefSeq" id="WP_011983148.1">
    <property type="nucleotide sequence ID" value="NC_009674.1"/>
</dbReference>
<dbReference type="SMR" id="A7GJR9"/>
<dbReference type="STRING" id="315749.Bcer98_0001"/>
<dbReference type="GeneID" id="33895294"/>
<dbReference type="KEGG" id="bcy:Bcer98_0001"/>
<dbReference type="eggNOG" id="COG0593">
    <property type="taxonomic scope" value="Bacteria"/>
</dbReference>
<dbReference type="HOGENOM" id="CLU_026910_3_1_9"/>
<dbReference type="OrthoDB" id="9807019at2"/>
<dbReference type="Proteomes" id="UP000002300">
    <property type="component" value="Chromosome"/>
</dbReference>
<dbReference type="GO" id="GO:0005737">
    <property type="term" value="C:cytoplasm"/>
    <property type="evidence" value="ECO:0007669"/>
    <property type="project" value="UniProtKB-SubCell"/>
</dbReference>
<dbReference type="GO" id="GO:0005886">
    <property type="term" value="C:plasma membrane"/>
    <property type="evidence" value="ECO:0007669"/>
    <property type="project" value="TreeGrafter"/>
</dbReference>
<dbReference type="GO" id="GO:0005524">
    <property type="term" value="F:ATP binding"/>
    <property type="evidence" value="ECO:0007669"/>
    <property type="project" value="UniProtKB-UniRule"/>
</dbReference>
<dbReference type="GO" id="GO:0016887">
    <property type="term" value="F:ATP hydrolysis activity"/>
    <property type="evidence" value="ECO:0007669"/>
    <property type="project" value="InterPro"/>
</dbReference>
<dbReference type="GO" id="GO:0003688">
    <property type="term" value="F:DNA replication origin binding"/>
    <property type="evidence" value="ECO:0007669"/>
    <property type="project" value="UniProtKB-UniRule"/>
</dbReference>
<dbReference type="GO" id="GO:0008289">
    <property type="term" value="F:lipid binding"/>
    <property type="evidence" value="ECO:0007669"/>
    <property type="project" value="UniProtKB-KW"/>
</dbReference>
<dbReference type="GO" id="GO:0006270">
    <property type="term" value="P:DNA replication initiation"/>
    <property type="evidence" value="ECO:0007669"/>
    <property type="project" value="UniProtKB-UniRule"/>
</dbReference>
<dbReference type="GO" id="GO:0006275">
    <property type="term" value="P:regulation of DNA replication"/>
    <property type="evidence" value="ECO:0007669"/>
    <property type="project" value="UniProtKB-UniRule"/>
</dbReference>
<dbReference type="CDD" id="cd00009">
    <property type="entry name" value="AAA"/>
    <property type="match status" value="1"/>
</dbReference>
<dbReference type="CDD" id="cd06571">
    <property type="entry name" value="Bac_DnaA_C"/>
    <property type="match status" value="1"/>
</dbReference>
<dbReference type="FunFam" id="1.10.1750.10:FF:000003">
    <property type="entry name" value="Chromosomal replication initiator protein DnaA"/>
    <property type="match status" value="1"/>
</dbReference>
<dbReference type="FunFam" id="1.10.8.60:FF:000003">
    <property type="entry name" value="Chromosomal replication initiator protein DnaA"/>
    <property type="match status" value="1"/>
</dbReference>
<dbReference type="FunFam" id="3.30.300.180:FF:000002">
    <property type="entry name" value="Chromosomal replication initiator protein DnaA"/>
    <property type="match status" value="1"/>
</dbReference>
<dbReference type="FunFam" id="3.40.50.300:FF:000150">
    <property type="entry name" value="Chromosomal replication initiator protein DnaA"/>
    <property type="match status" value="1"/>
</dbReference>
<dbReference type="Gene3D" id="1.10.1750.10">
    <property type="match status" value="1"/>
</dbReference>
<dbReference type="Gene3D" id="1.10.8.60">
    <property type="match status" value="1"/>
</dbReference>
<dbReference type="Gene3D" id="3.30.300.180">
    <property type="match status" value="1"/>
</dbReference>
<dbReference type="Gene3D" id="3.40.50.300">
    <property type="entry name" value="P-loop containing nucleotide triphosphate hydrolases"/>
    <property type="match status" value="1"/>
</dbReference>
<dbReference type="HAMAP" id="MF_00377">
    <property type="entry name" value="DnaA_bact"/>
    <property type="match status" value="1"/>
</dbReference>
<dbReference type="InterPro" id="IPR003593">
    <property type="entry name" value="AAA+_ATPase"/>
</dbReference>
<dbReference type="InterPro" id="IPR001957">
    <property type="entry name" value="Chromosome_initiator_DnaA"/>
</dbReference>
<dbReference type="InterPro" id="IPR020591">
    <property type="entry name" value="Chromosome_initiator_DnaA-like"/>
</dbReference>
<dbReference type="InterPro" id="IPR018312">
    <property type="entry name" value="Chromosome_initiator_DnaA_CS"/>
</dbReference>
<dbReference type="InterPro" id="IPR013159">
    <property type="entry name" value="DnaA_C"/>
</dbReference>
<dbReference type="InterPro" id="IPR013317">
    <property type="entry name" value="DnaA_dom"/>
</dbReference>
<dbReference type="InterPro" id="IPR024633">
    <property type="entry name" value="DnaA_N_dom"/>
</dbReference>
<dbReference type="InterPro" id="IPR038454">
    <property type="entry name" value="DnaA_N_sf"/>
</dbReference>
<dbReference type="InterPro" id="IPR027417">
    <property type="entry name" value="P-loop_NTPase"/>
</dbReference>
<dbReference type="InterPro" id="IPR010921">
    <property type="entry name" value="Trp_repressor/repl_initiator"/>
</dbReference>
<dbReference type="NCBIfam" id="TIGR00362">
    <property type="entry name" value="DnaA"/>
    <property type="match status" value="1"/>
</dbReference>
<dbReference type="NCBIfam" id="NF010686">
    <property type="entry name" value="PRK14086.1"/>
    <property type="match status" value="1"/>
</dbReference>
<dbReference type="PANTHER" id="PTHR30050">
    <property type="entry name" value="CHROMOSOMAL REPLICATION INITIATOR PROTEIN DNAA"/>
    <property type="match status" value="1"/>
</dbReference>
<dbReference type="PANTHER" id="PTHR30050:SF2">
    <property type="entry name" value="CHROMOSOMAL REPLICATION INITIATOR PROTEIN DNAA"/>
    <property type="match status" value="1"/>
</dbReference>
<dbReference type="Pfam" id="PF00308">
    <property type="entry name" value="Bac_DnaA"/>
    <property type="match status" value="1"/>
</dbReference>
<dbReference type="Pfam" id="PF08299">
    <property type="entry name" value="Bac_DnaA_C"/>
    <property type="match status" value="1"/>
</dbReference>
<dbReference type="Pfam" id="PF11638">
    <property type="entry name" value="DnaA_N"/>
    <property type="match status" value="1"/>
</dbReference>
<dbReference type="PRINTS" id="PR00051">
    <property type="entry name" value="DNAA"/>
</dbReference>
<dbReference type="SMART" id="SM00382">
    <property type="entry name" value="AAA"/>
    <property type="match status" value="1"/>
</dbReference>
<dbReference type="SMART" id="SM00760">
    <property type="entry name" value="Bac_DnaA_C"/>
    <property type="match status" value="1"/>
</dbReference>
<dbReference type="SUPFAM" id="SSF52540">
    <property type="entry name" value="P-loop containing nucleoside triphosphate hydrolases"/>
    <property type="match status" value="1"/>
</dbReference>
<dbReference type="SUPFAM" id="SSF48295">
    <property type="entry name" value="TrpR-like"/>
    <property type="match status" value="1"/>
</dbReference>
<dbReference type="PROSITE" id="PS01008">
    <property type="entry name" value="DNAA"/>
    <property type="match status" value="1"/>
</dbReference>
<comment type="function">
    <text evidence="1">Plays an essential role in the initiation and regulation of chromosomal replication. ATP-DnaA binds to the origin of replication (oriC) to initiate formation of the DNA replication initiation complex once per cell cycle. Binds the DnaA box (a 9 base pair repeat at the origin) and separates the double-stranded (ds)DNA. Forms a right-handed helical filament on oriC DNA; dsDNA binds to the exterior of the filament while single-stranded (ss)DNA is stabiized in the filament's interior. The ATP-DnaA-oriC complex binds and stabilizes one strand of the AT-rich DNA unwinding element (DUE), permitting loading of DNA polymerase. After initiation quickly degrades to an ADP-DnaA complex that is not apt for DNA replication. Binds acidic phospholipids.</text>
</comment>
<comment type="subunit">
    <text evidence="1">Oligomerizes as a right-handed, spiral filament on DNA at oriC.</text>
</comment>
<comment type="subcellular location">
    <subcellularLocation>
        <location evidence="1">Cytoplasm</location>
    </subcellularLocation>
</comment>
<comment type="domain">
    <text evidence="1">Domain I is involved in oligomerization and binding regulators, domain II is flexibile and of varying length in different bacteria, domain III forms the AAA+ region, while domain IV binds dsDNA.</text>
</comment>
<comment type="similarity">
    <text evidence="1">Belongs to the DnaA family.</text>
</comment>
<reference key="1">
    <citation type="journal article" date="2008" name="Chem. Biol. Interact.">
        <title>Extending the Bacillus cereus group genomics to putative food-borne pathogens of different toxicity.</title>
        <authorList>
            <person name="Lapidus A."/>
            <person name="Goltsman E."/>
            <person name="Auger S."/>
            <person name="Galleron N."/>
            <person name="Segurens B."/>
            <person name="Dossat C."/>
            <person name="Land M.L."/>
            <person name="Broussolle V."/>
            <person name="Brillard J."/>
            <person name="Guinebretiere M.-H."/>
            <person name="Sanchis V."/>
            <person name="Nguen-the C."/>
            <person name="Lereclus D."/>
            <person name="Richardson P."/>
            <person name="Wincker P."/>
            <person name="Weissenbach J."/>
            <person name="Ehrlich S.D."/>
            <person name="Sorokin A."/>
        </authorList>
    </citation>
    <scope>NUCLEOTIDE SEQUENCE [LARGE SCALE GENOMIC DNA]</scope>
    <source>
        <strain>DSM 22905 / CIP 110041 / 391-98 / NVH 391-98</strain>
    </source>
</reference>
<keyword id="KW-0067">ATP-binding</keyword>
<keyword id="KW-0963">Cytoplasm</keyword>
<keyword id="KW-0235">DNA replication</keyword>
<keyword id="KW-0238">DNA-binding</keyword>
<keyword id="KW-0446">Lipid-binding</keyword>
<keyword id="KW-0547">Nucleotide-binding</keyword>
<proteinExistence type="inferred from homology"/>
<feature type="chain" id="PRO_1000079940" description="Chromosomal replication initiator protein DnaA">
    <location>
        <begin position="1"/>
        <end position="446"/>
    </location>
</feature>
<feature type="region of interest" description="Domain I, interacts with DnaA modulators" evidence="1">
    <location>
        <begin position="1"/>
        <end position="81"/>
    </location>
</feature>
<feature type="region of interest" description="Domain II" evidence="1">
    <location>
        <begin position="81"/>
        <end position="109"/>
    </location>
</feature>
<feature type="region of interest" description="Domain III, AAA+ region" evidence="1">
    <location>
        <begin position="110"/>
        <end position="326"/>
    </location>
</feature>
<feature type="region of interest" description="Domain IV, binds dsDNA" evidence="1">
    <location>
        <begin position="327"/>
        <end position="446"/>
    </location>
</feature>
<feature type="binding site" evidence="1">
    <location>
        <position position="154"/>
    </location>
    <ligand>
        <name>ATP</name>
        <dbReference type="ChEBI" id="CHEBI:30616"/>
    </ligand>
</feature>
<feature type="binding site" evidence="1">
    <location>
        <position position="156"/>
    </location>
    <ligand>
        <name>ATP</name>
        <dbReference type="ChEBI" id="CHEBI:30616"/>
    </ligand>
</feature>
<feature type="binding site" evidence="1">
    <location>
        <position position="157"/>
    </location>
    <ligand>
        <name>ATP</name>
        <dbReference type="ChEBI" id="CHEBI:30616"/>
    </ligand>
</feature>
<feature type="binding site" evidence="1">
    <location>
        <position position="158"/>
    </location>
    <ligand>
        <name>ATP</name>
        <dbReference type="ChEBI" id="CHEBI:30616"/>
    </ligand>
</feature>
<organism>
    <name type="scientific">Bacillus cytotoxicus (strain DSM 22905 / CIP 110041 / 391-98 / NVH 391-98)</name>
    <dbReference type="NCBI Taxonomy" id="315749"/>
    <lineage>
        <taxon>Bacteria</taxon>
        <taxon>Bacillati</taxon>
        <taxon>Bacillota</taxon>
        <taxon>Bacilli</taxon>
        <taxon>Bacillales</taxon>
        <taxon>Bacillaceae</taxon>
        <taxon>Bacillus</taxon>
        <taxon>Bacillus cereus group</taxon>
    </lineage>
</organism>
<sequence length="446" mass="50706">MENIADLWNSALTELEKKVSKPSYETWLKSTKAHALKKDTLTIIAPNEFARDWLESHYSELISETIYDITGAKLNIRFIIPQSQTEEEVDYPPAKAKKMNDESNHLPQSMLNPKYTFDTFVIGSGNRFAHAASLAVAEAPAKAYNPLFIYGGVGLGKTHLMHAIGHYVIEHNPNAKVVYLSSEKFTNEFINSIRDNKAVDFRNKYRNVDVLLIDDIQFLAGKEQTQEEFFHTFNALHEESKQIVISSDRPPKEIPTLEDRLRSRFEWGLITDITPPDLETRIAILRKKAKAEGLDIPNEVMIYIANQIDSNIRELEGALIRVVAYSSLINKDINADLAAEALKDIIPNSKPKIISIYDIQKAVGDVYQVKLEDFKAKKRTKSVAFPRQIAMYLSRELTDSSLPKIGEEFGGRDHTTVIHAHEKISRLLKTDTQLQKQIEEINDILK</sequence>
<name>DNAA_BACCN</name>
<accession>A7GJR9</accession>
<gene>
    <name evidence="1" type="primary">dnaA</name>
    <name type="ordered locus">Bcer98_0001</name>
</gene>
<protein>
    <recommendedName>
        <fullName evidence="1">Chromosomal replication initiator protein DnaA</fullName>
    </recommendedName>
</protein>